<comment type="function">
    <text evidence="2">Catalyzes the NAD-dependent oxidative cleavage of spermidine and the subsequent transfer of the butylamine moiety of spermidine to the epsilon-amino group of a critical lysine residue of the eIF-5A precursor protein to form the intermediate deoxyhypusine residue. This is the first step of the post-translational modification of that lysine into an unusual amino acid residue named hypusine. Hypusination is unique to mature eIF-5A factor and is essential for its function.</text>
</comment>
<comment type="catalytic activity">
    <reaction>
        <text>[eIF5A protein]-L-lysine + spermidine = [eIF5A protein]-deoxyhypusine + propane-1,3-diamine</text>
        <dbReference type="Rhea" id="RHEA:33299"/>
        <dbReference type="Rhea" id="RHEA-COMP:10143"/>
        <dbReference type="Rhea" id="RHEA-COMP:10144"/>
        <dbReference type="ChEBI" id="CHEBI:29969"/>
        <dbReference type="ChEBI" id="CHEBI:57484"/>
        <dbReference type="ChEBI" id="CHEBI:57834"/>
        <dbReference type="ChEBI" id="CHEBI:82657"/>
        <dbReference type="EC" id="2.5.1.46"/>
    </reaction>
</comment>
<comment type="cofactor">
    <cofactor evidence="1">
        <name>NAD(+)</name>
        <dbReference type="ChEBI" id="CHEBI:57540"/>
    </cofactor>
</comment>
<comment type="pathway">
    <text>Protein modification; eIF5A hypusination.</text>
</comment>
<comment type="similarity">
    <text evidence="3">Belongs to the deoxyhypusine synthase family.</text>
</comment>
<sequence length="369" mass="40642">MEGTPPGAAPSSALAAVLKHSSALPPESAQVQGYDFNRGVDYHALLDAYRTTGFQATNFGRAVQQVNAMIEKKLEPLAVDEDHHADLTQSRRPLTGCTIFLGYTSNLISSGIRETIRYLVQHNMVDVLVTTAGGVEEDLIKCLAPTYLGEFSLRGKELRESGINRIGNLLVPNDNYCKFEDWLMPILDQMVLEQNTEGVKWTPSKMISRLGKEINNPDSVYYWAHKNHIPVLSPALTDGSLGDMIFFHSYKNPGLVLDIVEDLRLINTQAIFAKRSGMIILGGGVVKHHIANANLMRNGADYAVYINTAQEFDGSDSGARPDEAVSWGKIRMDAQPVKVYADASLVFPLLVAETFAQKADAFRAEKNED</sequence>
<organism>
    <name type="scientific">Mus musculus</name>
    <name type="common">Mouse</name>
    <dbReference type="NCBI Taxonomy" id="10090"/>
    <lineage>
        <taxon>Eukaryota</taxon>
        <taxon>Metazoa</taxon>
        <taxon>Chordata</taxon>
        <taxon>Craniata</taxon>
        <taxon>Vertebrata</taxon>
        <taxon>Euteleostomi</taxon>
        <taxon>Mammalia</taxon>
        <taxon>Eutheria</taxon>
        <taxon>Euarchontoglires</taxon>
        <taxon>Glires</taxon>
        <taxon>Rodentia</taxon>
        <taxon>Myomorpha</taxon>
        <taxon>Muroidea</taxon>
        <taxon>Muridae</taxon>
        <taxon>Murinae</taxon>
        <taxon>Mus</taxon>
        <taxon>Mus</taxon>
    </lineage>
</organism>
<gene>
    <name type="primary">Dhps</name>
</gene>
<feature type="chain" id="PRO_0000314944" description="Deoxyhypusine synthase">
    <location>
        <begin position="1"/>
        <end position="369"/>
    </location>
</feature>
<feature type="active site" description="Nucleophile" evidence="1">
    <location>
        <position position="329"/>
    </location>
</feature>
<feature type="binding site" evidence="1">
    <location>
        <begin position="105"/>
        <end position="109"/>
    </location>
    <ligand>
        <name>NAD(+)</name>
        <dbReference type="ChEBI" id="CHEBI:57540"/>
    </ligand>
</feature>
<feature type="binding site" evidence="1">
    <location>
        <begin position="131"/>
        <end position="133"/>
    </location>
    <ligand>
        <name>NAD(+)</name>
        <dbReference type="ChEBI" id="CHEBI:57540"/>
    </ligand>
</feature>
<feature type="binding site" evidence="1">
    <location>
        <begin position="136"/>
        <end position="137"/>
    </location>
    <ligand>
        <name>spermidine</name>
        <dbReference type="ChEBI" id="CHEBI:57834"/>
    </ligand>
</feature>
<feature type="binding site" evidence="1">
    <location>
        <position position="137"/>
    </location>
    <ligand>
        <name>NAD(+)</name>
        <dbReference type="ChEBI" id="CHEBI:57540"/>
    </ligand>
</feature>
<feature type="binding site" evidence="1">
    <location>
        <position position="238"/>
    </location>
    <ligand>
        <name>NAD(+)</name>
        <dbReference type="ChEBI" id="CHEBI:57540"/>
    </ligand>
</feature>
<feature type="binding site" evidence="1">
    <location>
        <position position="243"/>
    </location>
    <ligand>
        <name>spermidine</name>
        <dbReference type="ChEBI" id="CHEBI:57834"/>
    </ligand>
</feature>
<feature type="binding site" evidence="1">
    <location>
        <position position="283"/>
    </location>
    <ligand>
        <name>NAD(+)</name>
        <dbReference type="ChEBI" id="CHEBI:57540"/>
    </ligand>
</feature>
<feature type="binding site" evidence="1">
    <location>
        <position position="288"/>
    </location>
    <ligand>
        <name>spermidine</name>
        <dbReference type="ChEBI" id="CHEBI:57834"/>
    </ligand>
</feature>
<feature type="binding site" evidence="1">
    <location>
        <begin position="308"/>
        <end position="309"/>
    </location>
    <ligand>
        <name>NAD(+)</name>
        <dbReference type="ChEBI" id="CHEBI:57540"/>
    </ligand>
</feature>
<feature type="binding site" evidence="1">
    <location>
        <begin position="314"/>
        <end position="316"/>
    </location>
    <ligand>
        <name>spermidine</name>
        <dbReference type="ChEBI" id="CHEBI:57834"/>
    </ligand>
</feature>
<feature type="binding site" evidence="1">
    <location>
        <begin position="323"/>
        <end position="329"/>
    </location>
    <ligand>
        <name>spermidine</name>
        <dbReference type="ChEBI" id="CHEBI:57834"/>
    </ligand>
</feature>
<feature type="binding site" evidence="1">
    <location>
        <begin position="342"/>
        <end position="343"/>
    </location>
    <ligand>
        <name>NAD(+)</name>
        <dbReference type="ChEBI" id="CHEBI:57540"/>
    </ligand>
</feature>
<feature type="sequence conflict" description="In Ref. 1; BAE34820." evidence="3" ref="1">
    <original>Y</original>
    <variation>C</variation>
    <location>
        <position position="340"/>
    </location>
</feature>
<accession>Q3TXU5</accession>
<accession>E9QM48</accession>
<proteinExistence type="evidence at protein level"/>
<name>DHYS_MOUSE</name>
<keyword id="KW-0386">Hypusine biosynthesis</keyword>
<keyword id="KW-0520">NAD</keyword>
<keyword id="KW-1185">Reference proteome</keyword>
<keyword id="KW-0808">Transferase</keyword>
<dbReference type="EC" id="2.5.1.46"/>
<dbReference type="EMBL" id="AK159104">
    <property type="protein sequence ID" value="BAE34820.1"/>
    <property type="molecule type" value="mRNA"/>
</dbReference>
<dbReference type="EMBL" id="AC163703">
    <property type="status" value="NOT_ANNOTATED_CDS"/>
    <property type="molecule type" value="Genomic_DNA"/>
</dbReference>
<dbReference type="CCDS" id="CCDS22492.1"/>
<dbReference type="RefSeq" id="NP_001034603.1">
    <property type="nucleotide sequence ID" value="NM_001039514.1"/>
</dbReference>
<dbReference type="SMR" id="Q3TXU5"/>
<dbReference type="BioGRID" id="237030">
    <property type="interactions" value="16"/>
</dbReference>
<dbReference type="FunCoup" id="Q3TXU5">
    <property type="interactions" value="2309"/>
</dbReference>
<dbReference type="STRING" id="10090.ENSMUSP00000077733"/>
<dbReference type="iPTMnet" id="Q3TXU5"/>
<dbReference type="PhosphoSitePlus" id="Q3TXU5"/>
<dbReference type="PaxDb" id="10090-ENSMUSP00000077733"/>
<dbReference type="PeptideAtlas" id="Q3TXU5"/>
<dbReference type="ProteomicsDB" id="279538"/>
<dbReference type="Pumba" id="Q3TXU5"/>
<dbReference type="Antibodypedia" id="1964">
    <property type="antibodies" value="323 antibodies from 32 providers"/>
</dbReference>
<dbReference type="DNASU" id="330817"/>
<dbReference type="Ensembl" id="ENSMUST00000078665.13">
    <property type="protein sequence ID" value="ENSMUSP00000077733.7"/>
    <property type="gene ID" value="ENSMUSG00000060038.15"/>
</dbReference>
<dbReference type="GeneID" id="330817"/>
<dbReference type="KEGG" id="mmu:330817"/>
<dbReference type="UCSC" id="uc009mpf.1">
    <property type="organism name" value="mouse"/>
</dbReference>
<dbReference type="AGR" id="MGI:2683592"/>
<dbReference type="CTD" id="1725"/>
<dbReference type="MGI" id="MGI:2683592">
    <property type="gene designation" value="Dhps"/>
</dbReference>
<dbReference type="VEuPathDB" id="HostDB:ENSMUSG00000060038"/>
<dbReference type="eggNOG" id="KOG2924">
    <property type="taxonomic scope" value="Eukaryota"/>
</dbReference>
<dbReference type="GeneTree" id="ENSGT00390000008063"/>
<dbReference type="HOGENOM" id="CLU_039781_0_0_1"/>
<dbReference type="InParanoid" id="Q3TXU5"/>
<dbReference type="OMA" id="HSIINAN"/>
<dbReference type="OrthoDB" id="294378at2759"/>
<dbReference type="PhylomeDB" id="Q3TXU5"/>
<dbReference type="TreeFam" id="TF300625"/>
<dbReference type="BRENDA" id="2.5.1.46">
    <property type="organism ID" value="3474"/>
</dbReference>
<dbReference type="Reactome" id="R-MMU-204626">
    <property type="pathway name" value="Hypusine synthesis from eIF5A-lysine"/>
</dbReference>
<dbReference type="UniPathway" id="UPA00354"/>
<dbReference type="BioGRID-ORCS" id="330817">
    <property type="hits" value="33 hits in 82 CRISPR screens"/>
</dbReference>
<dbReference type="ChiTaRS" id="Dhps">
    <property type="organism name" value="mouse"/>
</dbReference>
<dbReference type="PRO" id="PR:Q3TXU5"/>
<dbReference type="Proteomes" id="UP000000589">
    <property type="component" value="Chromosome 8"/>
</dbReference>
<dbReference type="RNAct" id="Q3TXU5">
    <property type="molecule type" value="protein"/>
</dbReference>
<dbReference type="Bgee" id="ENSMUSG00000060038">
    <property type="expression patterns" value="Expressed in floor plate of midbrain and 247 other cell types or tissues"/>
</dbReference>
<dbReference type="ExpressionAtlas" id="Q3TXU5">
    <property type="expression patterns" value="baseline and differential"/>
</dbReference>
<dbReference type="GO" id="GO:0005829">
    <property type="term" value="C:cytosol"/>
    <property type="evidence" value="ECO:0000314"/>
    <property type="project" value="MGI"/>
</dbReference>
<dbReference type="GO" id="GO:0034038">
    <property type="term" value="F:deoxyhypusine synthase activity"/>
    <property type="evidence" value="ECO:0000315"/>
    <property type="project" value="MGI"/>
</dbReference>
<dbReference type="GO" id="GO:0042802">
    <property type="term" value="F:identical protein binding"/>
    <property type="evidence" value="ECO:0007669"/>
    <property type="project" value="Ensembl"/>
</dbReference>
<dbReference type="GO" id="GO:0042593">
    <property type="term" value="P:glucose homeostasis"/>
    <property type="evidence" value="ECO:0000315"/>
    <property type="project" value="MGI"/>
</dbReference>
<dbReference type="GO" id="GO:0042102">
    <property type="term" value="P:positive regulation of T cell proliferation"/>
    <property type="evidence" value="ECO:0000315"/>
    <property type="project" value="MGI"/>
</dbReference>
<dbReference type="GO" id="GO:0046203">
    <property type="term" value="P:spermidine catabolic process"/>
    <property type="evidence" value="ECO:0007669"/>
    <property type="project" value="Ensembl"/>
</dbReference>
<dbReference type="FunFam" id="3.40.910.10:FF:000010">
    <property type="entry name" value="Deoxyhypusine synthase"/>
    <property type="match status" value="1"/>
</dbReference>
<dbReference type="Gene3D" id="3.40.910.10">
    <property type="entry name" value="Deoxyhypusine synthase"/>
    <property type="match status" value="1"/>
</dbReference>
<dbReference type="InterPro" id="IPR002773">
    <property type="entry name" value="Deoxyhypusine_synthase"/>
</dbReference>
<dbReference type="InterPro" id="IPR036982">
    <property type="entry name" value="Deoxyhypusine_synthase_sf"/>
</dbReference>
<dbReference type="InterPro" id="IPR029035">
    <property type="entry name" value="DHS-like_NAD/FAD-binding_dom"/>
</dbReference>
<dbReference type="NCBIfam" id="TIGR00321">
    <property type="entry name" value="dhys"/>
    <property type="match status" value="1"/>
</dbReference>
<dbReference type="PANTHER" id="PTHR11703">
    <property type="entry name" value="DEOXYHYPUSINE SYNTHASE"/>
    <property type="match status" value="1"/>
</dbReference>
<dbReference type="PANTHER" id="PTHR11703:SF0">
    <property type="entry name" value="DEOXYHYPUSINE SYNTHASE"/>
    <property type="match status" value="1"/>
</dbReference>
<dbReference type="Pfam" id="PF01916">
    <property type="entry name" value="DS"/>
    <property type="match status" value="1"/>
</dbReference>
<dbReference type="SUPFAM" id="SSF52467">
    <property type="entry name" value="DHS-like NAD/FAD-binding domain"/>
    <property type="match status" value="1"/>
</dbReference>
<protein>
    <recommendedName>
        <fullName>Deoxyhypusine synthase</fullName>
        <shortName>DHS</shortName>
        <ecNumber>2.5.1.46</ecNumber>
    </recommendedName>
</protein>
<evidence type="ECO:0000250" key="1"/>
<evidence type="ECO:0000250" key="2">
    <source>
        <dbReference type="UniProtKB" id="P49366"/>
    </source>
</evidence>
<evidence type="ECO:0000305" key="3"/>
<reference key="1">
    <citation type="journal article" date="2005" name="Science">
        <title>The transcriptional landscape of the mammalian genome.</title>
        <authorList>
            <person name="Carninci P."/>
            <person name="Kasukawa T."/>
            <person name="Katayama S."/>
            <person name="Gough J."/>
            <person name="Frith M.C."/>
            <person name="Maeda N."/>
            <person name="Oyama R."/>
            <person name="Ravasi T."/>
            <person name="Lenhard B."/>
            <person name="Wells C."/>
            <person name="Kodzius R."/>
            <person name="Shimokawa K."/>
            <person name="Bajic V.B."/>
            <person name="Brenner S.E."/>
            <person name="Batalov S."/>
            <person name="Forrest A.R."/>
            <person name="Zavolan M."/>
            <person name="Davis M.J."/>
            <person name="Wilming L.G."/>
            <person name="Aidinis V."/>
            <person name="Allen J.E."/>
            <person name="Ambesi-Impiombato A."/>
            <person name="Apweiler R."/>
            <person name="Aturaliya R.N."/>
            <person name="Bailey T.L."/>
            <person name="Bansal M."/>
            <person name="Baxter L."/>
            <person name="Beisel K.W."/>
            <person name="Bersano T."/>
            <person name="Bono H."/>
            <person name="Chalk A.M."/>
            <person name="Chiu K.P."/>
            <person name="Choudhary V."/>
            <person name="Christoffels A."/>
            <person name="Clutterbuck D.R."/>
            <person name="Crowe M.L."/>
            <person name="Dalla E."/>
            <person name="Dalrymple B.P."/>
            <person name="de Bono B."/>
            <person name="Della Gatta G."/>
            <person name="di Bernardo D."/>
            <person name="Down T."/>
            <person name="Engstrom P."/>
            <person name="Fagiolini M."/>
            <person name="Faulkner G."/>
            <person name="Fletcher C.F."/>
            <person name="Fukushima T."/>
            <person name="Furuno M."/>
            <person name="Futaki S."/>
            <person name="Gariboldi M."/>
            <person name="Georgii-Hemming P."/>
            <person name="Gingeras T.R."/>
            <person name="Gojobori T."/>
            <person name="Green R.E."/>
            <person name="Gustincich S."/>
            <person name="Harbers M."/>
            <person name="Hayashi Y."/>
            <person name="Hensch T.K."/>
            <person name="Hirokawa N."/>
            <person name="Hill D."/>
            <person name="Huminiecki L."/>
            <person name="Iacono M."/>
            <person name="Ikeo K."/>
            <person name="Iwama A."/>
            <person name="Ishikawa T."/>
            <person name="Jakt M."/>
            <person name="Kanapin A."/>
            <person name="Katoh M."/>
            <person name="Kawasawa Y."/>
            <person name="Kelso J."/>
            <person name="Kitamura H."/>
            <person name="Kitano H."/>
            <person name="Kollias G."/>
            <person name="Krishnan S.P."/>
            <person name="Kruger A."/>
            <person name="Kummerfeld S.K."/>
            <person name="Kurochkin I.V."/>
            <person name="Lareau L.F."/>
            <person name="Lazarevic D."/>
            <person name="Lipovich L."/>
            <person name="Liu J."/>
            <person name="Liuni S."/>
            <person name="McWilliam S."/>
            <person name="Madan Babu M."/>
            <person name="Madera M."/>
            <person name="Marchionni L."/>
            <person name="Matsuda H."/>
            <person name="Matsuzawa S."/>
            <person name="Miki H."/>
            <person name="Mignone F."/>
            <person name="Miyake S."/>
            <person name="Morris K."/>
            <person name="Mottagui-Tabar S."/>
            <person name="Mulder N."/>
            <person name="Nakano N."/>
            <person name="Nakauchi H."/>
            <person name="Ng P."/>
            <person name="Nilsson R."/>
            <person name="Nishiguchi S."/>
            <person name="Nishikawa S."/>
            <person name="Nori F."/>
            <person name="Ohara O."/>
            <person name="Okazaki Y."/>
            <person name="Orlando V."/>
            <person name="Pang K.C."/>
            <person name="Pavan W.J."/>
            <person name="Pavesi G."/>
            <person name="Pesole G."/>
            <person name="Petrovsky N."/>
            <person name="Piazza S."/>
            <person name="Reed J."/>
            <person name="Reid J.F."/>
            <person name="Ring B.Z."/>
            <person name="Ringwald M."/>
            <person name="Rost B."/>
            <person name="Ruan Y."/>
            <person name="Salzberg S.L."/>
            <person name="Sandelin A."/>
            <person name="Schneider C."/>
            <person name="Schoenbach C."/>
            <person name="Sekiguchi K."/>
            <person name="Semple C.A."/>
            <person name="Seno S."/>
            <person name="Sessa L."/>
            <person name="Sheng Y."/>
            <person name="Shibata Y."/>
            <person name="Shimada H."/>
            <person name="Shimada K."/>
            <person name="Silva D."/>
            <person name="Sinclair B."/>
            <person name="Sperling S."/>
            <person name="Stupka E."/>
            <person name="Sugiura K."/>
            <person name="Sultana R."/>
            <person name="Takenaka Y."/>
            <person name="Taki K."/>
            <person name="Tammoja K."/>
            <person name="Tan S.L."/>
            <person name="Tang S."/>
            <person name="Taylor M.S."/>
            <person name="Tegner J."/>
            <person name="Teichmann S.A."/>
            <person name="Ueda H.R."/>
            <person name="van Nimwegen E."/>
            <person name="Verardo R."/>
            <person name="Wei C.L."/>
            <person name="Yagi K."/>
            <person name="Yamanishi H."/>
            <person name="Zabarovsky E."/>
            <person name="Zhu S."/>
            <person name="Zimmer A."/>
            <person name="Hide W."/>
            <person name="Bult C."/>
            <person name="Grimmond S.M."/>
            <person name="Teasdale R.D."/>
            <person name="Liu E.T."/>
            <person name="Brusic V."/>
            <person name="Quackenbush J."/>
            <person name="Wahlestedt C."/>
            <person name="Mattick J.S."/>
            <person name="Hume D.A."/>
            <person name="Kai C."/>
            <person name="Sasaki D."/>
            <person name="Tomaru Y."/>
            <person name="Fukuda S."/>
            <person name="Kanamori-Katayama M."/>
            <person name="Suzuki M."/>
            <person name="Aoki J."/>
            <person name="Arakawa T."/>
            <person name="Iida J."/>
            <person name="Imamura K."/>
            <person name="Itoh M."/>
            <person name="Kato T."/>
            <person name="Kawaji H."/>
            <person name="Kawagashira N."/>
            <person name="Kawashima T."/>
            <person name="Kojima M."/>
            <person name="Kondo S."/>
            <person name="Konno H."/>
            <person name="Nakano K."/>
            <person name="Ninomiya N."/>
            <person name="Nishio T."/>
            <person name="Okada M."/>
            <person name="Plessy C."/>
            <person name="Shibata K."/>
            <person name="Shiraki T."/>
            <person name="Suzuki S."/>
            <person name="Tagami M."/>
            <person name="Waki K."/>
            <person name="Watahiki A."/>
            <person name="Okamura-Oho Y."/>
            <person name="Suzuki H."/>
            <person name="Kawai J."/>
            <person name="Hayashizaki Y."/>
        </authorList>
    </citation>
    <scope>NUCLEOTIDE SEQUENCE [LARGE SCALE MRNA]</scope>
    <source>
        <strain>C57BL/6J</strain>
    </source>
</reference>
<reference key="2">
    <citation type="journal article" date="2009" name="PLoS Biol.">
        <title>Lineage-specific biology revealed by a finished genome assembly of the mouse.</title>
        <authorList>
            <person name="Church D.M."/>
            <person name="Goodstadt L."/>
            <person name="Hillier L.W."/>
            <person name="Zody M.C."/>
            <person name="Goldstein S."/>
            <person name="She X."/>
            <person name="Bult C.J."/>
            <person name="Agarwala R."/>
            <person name="Cherry J.L."/>
            <person name="DiCuccio M."/>
            <person name="Hlavina W."/>
            <person name="Kapustin Y."/>
            <person name="Meric P."/>
            <person name="Maglott D."/>
            <person name="Birtle Z."/>
            <person name="Marques A.C."/>
            <person name="Graves T."/>
            <person name="Zhou S."/>
            <person name="Teague B."/>
            <person name="Potamousis K."/>
            <person name="Churas C."/>
            <person name="Place M."/>
            <person name="Herschleb J."/>
            <person name="Runnheim R."/>
            <person name="Forrest D."/>
            <person name="Amos-Landgraf J."/>
            <person name="Schwartz D.C."/>
            <person name="Cheng Z."/>
            <person name="Lindblad-Toh K."/>
            <person name="Eichler E.E."/>
            <person name="Ponting C.P."/>
        </authorList>
    </citation>
    <scope>NUCLEOTIDE SEQUENCE [LARGE SCALE GENOMIC DNA]</scope>
    <source>
        <strain>C57BL/6J</strain>
    </source>
</reference>
<reference key="3">
    <citation type="journal article" date="2010" name="Cell">
        <title>A tissue-specific atlas of mouse protein phosphorylation and expression.</title>
        <authorList>
            <person name="Huttlin E.L."/>
            <person name="Jedrychowski M.P."/>
            <person name="Elias J.E."/>
            <person name="Goswami T."/>
            <person name="Rad R."/>
            <person name="Beausoleil S.A."/>
            <person name="Villen J."/>
            <person name="Haas W."/>
            <person name="Sowa M.E."/>
            <person name="Gygi S.P."/>
        </authorList>
    </citation>
    <scope>IDENTIFICATION BY MASS SPECTROMETRY [LARGE SCALE ANALYSIS]</scope>
    <source>
        <tissue>Brain</tissue>
        <tissue>Spleen</tissue>
        <tissue>Testis</tissue>
    </source>
</reference>